<organism>
    <name type="scientific">Dacelo novaeguineae</name>
    <name type="common">Laughing kookaburra</name>
    <name type="synonym">Dacelo gigas</name>
    <dbReference type="NCBI Taxonomy" id="8939"/>
    <lineage>
        <taxon>Eukaryota</taxon>
        <taxon>Metazoa</taxon>
        <taxon>Chordata</taxon>
        <taxon>Craniata</taxon>
        <taxon>Vertebrata</taxon>
        <taxon>Euteleostomi</taxon>
        <taxon>Archelosauria</taxon>
        <taxon>Archosauria</taxon>
        <taxon>Dinosauria</taxon>
        <taxon>Saurischia</taxon>
        <taxon>Theropoda</taxon>
        <taxon>Coelurosauria</taxon>
        <taxon>Aves</taxon>
        <taxon>Neognathae</taxon>
        <taxon>Neoaves</taxon>
        <taxon>Telluraves</taxon>
        <taxon>Coraciimorphae</taxon>
        <taxon>Coraciiformes</taxon>
        <taxon>Alcedinidae</taxon>
        <taxon>Dacelo</taxon>
    </lineage>
</organism>
<feature type="chain" id="PRO_0000073099" description="Ovomucoid">
    <location>
        <begin position="1" status="less than"/>
        <end position="55" status="greater than"/>
    </location>
</feature>
<feature type="domain" description="Kazal-like" evidence="1">
    <location>
        <begin position="5"/>
        <end position="55"/>
    </location>
</feature>
<feature type="site" description="Reactive bond 3">
    <location>
        <begin position="17"/>
        <end position="18"/>
    </location>
</feature>
<feature type="glycosylation site" description="N-linked (GlcNAc...) asparagine" evidence="2">
    <location>
        <position position="44"/>
    </location>
</feature>
<feature type="disulfide bond">
    <location>
        <begin position="7"/>
        <end position="37"/>
    </location>
</feature>
<feature type="disulfide bond">
    <location>
        <begin position="15"/>
        <end position="34"/>
    </location>
</feature>
<feature type="disulfide bond">
    <location>
        <begin position="23"/>
        <end position="55"/>
    </location>
</feature>
<feature type="non-terminal residue">
    <location>
        <position position="1"/>
    </location>
</feature>
<feature type="non-terminal residue">
    <location>
        <position position="55"/>
    </location>
</feature>
<accession>P05617</accession>
<reference key="1">
    <citation type="journal article" date="1987" name="Biochemistry">
        <title>Ovomucoid third domains from 100 avian species: isolation, sequences, and hypervariability of enzyme-inhibitor contact residues.</title>
        <authorList>
            <person name="Laskowski M. Jr."/>
            <person name="Kato I."/>
            <person name="Ardelt W."/>
            <person name="Cook J."/>
            <person name="Denton A."/>
            <person name="Empie M.W."/>
            <person name="Kohr W.J."/>
            <person name="Park S.J."/>
            <person name="Parks K."/>
            <person name="Schatzley B.L."/>
            <person name="Schoenberger O.L."/>
            <person name="Tashiro M."/>
            <person name="Vichot G."/>
            <person name="Whatley H.E."/>
            <person name="Wieczorek A."/>
            <person name="Wieczorek M."/>
        </authorList>
    </citation>
    <scope>PROTEIN SEQUENCE</scope>
</reference>
<proteinExistence type="evidence at protein level"/>
<comment type="subcellular location">
    <subcellularLocation>
        <location>Secreted</location>
    </subcellularLocation>
</comment>
<comment type="domain">
    <text>Avian ovomucoid consists of three homologous, tandem Kazal family inhibitory domains.</text>
</comment>
<sequence>IATQVDCSEHPKPACTLDYRPICGSDSKTYSNKCDFCNAVMDSNGTLTLSHFGKC</sequence>
<name>IOVO_DACNO</name>
<evidence type="ECO:0000255" key="1">
    <source>
        <dbReference type="PROSITE-ProRule" id="PRU00798"/>
    </source>
</evidence>
<evidence type="ECO:0000269" key="2">
    <source>
    </source>
</evidence>
<protein>
    <recommendedName>
        <fullName>Ovomucoid</fullName>
    </recommendedName>
</protein>
<keyword id="KW-0903">Direct protein sequencing</keyword>
<keyword id="KW-1015">Disulfide bond</keyword>
<keyword id="KW-0325">Glycoprotein</keyword>
<keyword id="KW-0646">Protease inhibitor</keyword>
<keyword id="KW-0677">Repeat</keyword>
<keyword id="KW-0964">Secreted</keyword>
<keyword id="KW-0722">Serine protease inhibitor</keyword>
<dbReference type="PIR" id="I31442">
    <property type="entry name" value="I31442"/>
</dbReference>
<dbReference type="SMR" id="P05617"/>
<dbReference type="iPTMnet" id="P05617"/>
<dbReference type="GO" id="GO:0005576">
    <property type="term" value="C:extracellular region"/>
    <property type="evidence" value="ECO:0007669"/>
    <property type="project" value="UniProtKB-SubCell"/>
</dbReference>
<dbReference type="GO" id="GO:0004867">
    <property type="term" value="F:serine-type endopeptidase inhibitor activity"/>
    <property type="evidence" value="ECO:0007669"/>
    <property type="project" value="UniProtKB-KW"/>
</dbReference>
<dbReference type="CDD" id="cd00104">
    <property type="entry name" value="KAZAL_FS"/>
    <property type="match status" value="1"/>
</dbReference>
<dbReference type="FunFam" id="3.30.60.30:FF:000037">
    <property type="entry name" value="Ovomucoid"/>
    <property type="match status" value="1"/>
</dbReference>
<dbReference type="Gene3D" id="3.30.60.30">
    <property type="match status" value="1"/>
</dbReference>
<dbReference type="InterPro" id="IPR051597">
    <property type="entry name" value="Bifunctional_prot_inhibitor"/>
</dbReference>
<dbReference type="InterPro" id="IPR002350">
    <property type="entry name" value="Kazal_dom"/>
</dbReference>
<dbReference type="InterPro" id="IPR036058">
    <property type="entry name" value="Kazal_dom_sf"/>
</dbReference>
<dbReference type="InterPro" id="IPR001239">
    <property type="entry name" value="Prot_inh_Kazal-m"/>
</dbReference>
<dbReference type="PANTHER" id="PTHR47729:SF1">
    <property type="entry name" value="OVOMUCOID-LIKE-RELATED"/>
    <property type="match status" value="1"/>
</dbReference>
<dbReference type="PANTHER" id="PTHR47729">
    <property type="entry name" value="SERINE PEPTIDASE INHIBITOR, KAZAL TYPE 2, TANDEM DUPLICATE 1-RELATED"/>
    <property type="match status" value="1"/>
</dbReference>
<dbReference type="Pfam" id="PF00050">
    <property type="entry name" value="Kazal_1"/>
    <property type="match status" value="1"/>
</dbReference>
<dbReference type="PRINTS" id="PR00290">
    <property type="entry name" value="KAZALINHBTR"/>
</dbReference>
<dbReference type="SMART" id="SM00280">
    <property type="entry name" value="KAZAL"/>
    <property type="match status" value="1"/>
</dbReference>
<dbReference type="SUPFAM" id="SSF100895">
    <property type="entry name" value="Kazal-type serine protease inhibitors"/>
    <property type="match status" value="1"/>
</dbReference>
<dbReference type="PROSITE" id="PS00282">
    <property type="entry name" value="KAZAL_1"/>
    <property type="match status" value="1"/>
</dbReference>
<dbReference type="PROSITE" id="PS51465">
    <property type="entry name" value="KAZAL_2"/>
    <property type="match status" value="1"/>
</dbReference>